<comment type="function">
    <text>May play a role in growth regulation and in negative regulation of cell cycle progression.</text>
</comment>
<comment type="subcellular location">
    <subcellularLocation>
        <location evidence="1">Cytoplasm</location>
    </subcellularLocation>
</comment>
<comment type="alternative products">
    <event type="alternative splicing"/>
    <isoform>
        <id>Q16589-1</id>
        <name>1</name>
        <sequence type="displayed"/>
    </isoform>
    <isoform>
        <id>Q16589-2</id>
        <name>2</name>
        <sequence type="described" ref="VSP_053893"/>
    </isoform>
</comment>
<comment type="tissue specificity">
    <text>High levels in cerebellum, thymus, spleen and prostate. Low levels in skeletal muscle.</text>
</comment>
<comment type="developmental stage">
    <text>Expression levels increase through the cell cycle to peak in the mid/late-S phase and decrease during G2/M phase.</text>
</comment>
<comment type="induction">
    <text>Activated by actinomycin-D induced DNA damage.</text>
</comment>
<comment type="similarity">
    <text evidence="5">Belongs to the cyclin family. Cyclin G subfamily.</text>
</comment>
<feature type="chain" id="PRO_0000080469" description="Cyclin-G2">
    <location>
        <begin position="1"/>
        <end position="344"/>
    </location>
</feature>
<feature type="region of interest" description="Disordered" evidence="2">
    <location>
        <begin position="301"/>
        <end position="320"/>
    </location>
</feature>
<feature type="compositionally biased region" description="Acidic residues" evidence="2">
    <location>
        <begin position="301"/>
        <end position="313"/>
    </location>
</feature>
<feature type="splice variant" id="VSP_053893" description="In isoform 2." evidence="4">
    <original>SEDSCEDMSCGEESLSSSPPSDQECTFFFNFKVAQTLCFPS</original>
    <variation>R</variation>
    <location>
        <begin position="304"/>
        <end position="344"/>
    </location>
</feature>
<feature type="sequence variant" id="VAR_014333" description="In dbSNP:rs4150050." evidence="3">
    <original>L</original>
    <variation>V</variation>
    <location>
        <position position="4"/>
    </location>
</feature>
<feature type="sequence variant" id="VAR_014334" description="In dbSNP:rs4150051." evidence="3">
    <original>E</original>
    <variation>G</variation>
    <location>
        <position position="28"/>
    </location>
</feature>
<feature type="sequence conflict" description="In Ref. 5; CAG46997." evidence="5" ref="5">
    <original>R</original>
    <variation>W</variation>
    <location>
        <position position="127"/>
    </location>
</feature>
<accession>Q16589</accession>
<accession>B4DF25</accession>
<accession>Q6FGA7</accession>
<accession>Q6FGC6</accession>
<organism>
    <name type="scientific">Homo sapiens</name>
    <name type="common">Human</name>
    <dbReference type="NCBI Taxonomy" id="9606"/>
    <lineage>
        <taxon>Eukaryota</taxon>
        <taxon>Metazoa</taxon>
        <taxon>Chordata</taxon>
        <taxon>Craniata</taxon>
        <taxon>Vertebrata</taxon>
        <taxon>Euteleostomi</taxon>
        <taxon>Mammalia</taxon>
        <taxon>Eutheria</taxon>
        <taxon>Euarchontoglires</taxon>
        <taxon>Primates</taxon>
        <taxon>Haplorrhini</taxon>
        <taxon>Catarrhini</taxon>
        <taxon>Hominidae</taxon>
        <taxon>Homo</taxon>
    </lineage>
</organism>
<name>CCNG2_HUMAN</name>
<dbReference type="EMBL" id="U47414">
    <property type="protein sequence ID" value="AAC50689.1"/>
    <property type="molecule type" value="mRNA"/>
</dbReference>
<dbReference type="EMBL" id="L49506">
    <property type="protein sequence ID" value="AAC41978.1"/>
    <property type="molecule type" value="mRNA"/>
</dbReference>
<dbReference type="EMBL" id="AF549495">
    <property type="protein sequence ID" value="AAN40704.1"/>
    <property type="molecule type" value="Genomic_DNA"/>
</dbReference>
<dbReference type="EMBL" id="AK292029">
    <property type="protein sequence ID" value="BAF84718.1"/>
    <property type="molecule type" value="mRNA"/>
</dbReference>
<dbReference type="EMBL" id="AK293899">
    <property type="protein sequence ID" value="BAG57286.1"/>
    <property type="molecule type" value="mRNA"/>
</dbReference>
<dbReference type="EMBL" id="CR542181">
    <property type="protein sequence ID" value="CAG46978.1"/>
    <property type="molecule type" value="mRNA"/>
</dbReference>
<dbReference type="EMBL" id="CR542200">
    <property type="protein sequence ID" value="CAG46997.1"/>
    <property type="molecule type" value="mRNA"/>
</dbReference>
<dbReference type="EMBL" id="BT019503">
    <property type="protein sequence ID" value="AAV38310.1"/>
    <property type="molecule type" value="mRNA"/>
</dbReference>
<dbReference type="EMBL" id="AC008638">
    <property type="status" value="NOT_ANNOTATED_CDS"/>
    <property type="molecule type" value="Genomic_DNA"/>
</dbReference>
<dbReference type="EMBL" id="AC092674">
    <property type="status" value="NOT_ANNOTATED_CDS"/>
    <property type="molecule type" value="Genomic_DNA"/>
</dbReference>
<dbReference type="EMBL" id="AC104771">
    <property type="status" value="NOT_ANNOTATED_CDS"/>
    <property type="molecule type" value="Genomic_DNA"/>
</dbReference>
<dbReference type="EMBL" id="AC108144">
    <property type="status" value="NOT_ANNOTATED_CDS"/>
    <property type="molecule type" value="Genomic_DNA"/>
</dbReference>
<dbReference type="EMBL" id="AC112716">
    <property type="status" value="NOT_ANNOTATED_CDS"/>
    <property type="molecule type" value="Genomic_DNA"/>
</dbReference>
<dbReference type="EMBL" id="CH471057">
    <property type="protein sequence ID" value="EAX05812.1"/>
    <property type="molecule type" value="Genomic_DNA"/>
</dbReference>
<dbReference type="CCDS" id="CCDS3581.1">
    <molecule id="Q16589-1"/>
</dbReference>
<dbReference type="RefSeq" id="NP_004345.1">
    <molecule id="Q16589-1"/>
    <property type="nucleotide sequence ID" value="NM_004354.3"/>
</dbReference>
<dbReference type="RefSeq" id="XP_011530700.1">
    <molecule id="Q16589-1"/>
    <property type="nucleotide sequence ID" value="XM_011532398.2"/>
</dbReference>
<dbReference type="RefSeq" id="XP_011530701.1">
    <molecule id="Q16589-1"/>
    <property type="nucleotide sequence ID" value="XM_011532399.3"/>
</dbReference>
<dbReference type="RefSeq" id="XP_054207169.1">
    <molecule id="Q16589-1"/>
    <property type="nucleotide sequence ID" value="XM_054351194.1"/>
</dbReference>
<dbReference type="RefSeq" id="XP_054207170.1">
    <molecule id="Q16589-1"/>
    <property type="nucleotide sequence ID" value="XM_054351195.1"/>
</dbReference>
<dbReference type="SMR" id="Q16589"/>
<dbReference type="BioGRID" id="107341">
    <property type="interactions" value="24"/>
</dbReference>
<dbReference type="FunCoup" id="Q16589">
    <property type="interactions" value="2728"/>
</dbReference>
<dbReference type="IntAct" id="Q16589">
    <property type="interactions" value="5"/>
</dbReference>
<dbReference type="MINT" id="Q16589"/>
<dbReference type="STRING" id="9606.ENSP00000315743"/>
<dbReference type="GlyGen" id="Q16589">
    <property type="glycosylation" value="1 site, 1 O-linked glycan (1 site)"/>
</dbReference>
<dbReference type="iPTMnet" id="Q16589"/>
<dbReference type="PhosphoSitePlus" id="Q16589"/>
<dbReference type="BioMuta" id="CCNG2"/>
<dbReference type="DMDM" id="9087132"/>
<dbReference type="MassIVE" id="Q16589"/>
<dbReference type="PaxDb" id="9606-ENSP00000315743"/>
<dbReference type="PeptideAtlas" id="Q16589"/>
<dbReference type="ProteomicsDB" id="4002"/>
<dbReference type="ProteomicsDB" id="60937">
    <molecule id="Q16589-1"/>
</dbReference>
<dbReference type="Antibodypedia" id="13540">
    <property type="antibodies" value="136 antibodies from 27 providers"/>
</dbReference>
<dbReference type="DNASU" id="901"/>
<dbReference type="Ensembl" id="ENST00000316355.10">
    <molecule id="Q16589-1"/>
    <property type="protein sequence ID" value="ENSP00000315743.5"/>
    <property type="gene ID" value="ENSG00000138764.15"/>
</dbReference>
<dbReference type="Ensembl" id="ENST00000395640.5">
    <molecule id="Q16589-1"/>
    <property type="protein sequence ID" value="ENSP00000379002.1"/>
    <property type="gene ID" value="ENSG00000138764.15"/>
</dbReference>
<dbReference type="Ensembl" id="ENST00000502280.5">
    <molecule id="Q16589-1"/>
    <property type="protein sequence ID" value="ENSP00000424665.1"/>
    <property type="gene ID" value="ENSG00000138764.15"/>
</dbReference>
<dbReference type="Ensembl" id="ENST00000509972.1">
    <molecule id="Q16589-2"/>
    <property type="protein sequence ID" value="ENSP00000426476.1"/>
    <property type="gene ID" value="ENSG00000138764.15"/>
</dbReference>
<dbReference type="GeneID" id="901"/>
<dbReference type="KEGG" id="hsa:901"/>
<dbReference type="MANE-Select" id="ENST00000316355.10">
    <property type="protein sequence ID" value="ENSP00000315743.5"/>
    <property type="RefSeq nucleotide sequence ID" value="NM_004354.3"/>
    <property type="RefSeq protein sequence ID" value="NP_004345.1"/>
</dbReference>
<dbReference type="UCSC" id="uc003hkn.5">
    <molecule id="Q16589-1"/>
    <property type="organism name" value="human"/>
</dbReference>
<dbReference type="AGR" id="HGNC:1593"/>
<dbReference type="CTD" id="901"/>
<dbReference type="DisGeNET" id="901"/>
<dbReference type="GeneCards" id="CCNG2"/>
<dbReference type="HGNC" id="HGNC:1593">
    <property type="gene designation" value="CCNG2"/>
</dbReference>
<dbReference type="HPA" id="ENSG00000138764">
    <property type="expression patterns" value="Low tissue specificity"/>
</dbReference>
<dbReference type="MIM" id="603203">
    <property type="type" value="gene"/>
</dbReference>
<dbReference type="neXtProt" id="NX_Q16589"/>
<dbReference type="OpenTargets" id="ENSG00000138764"/>
<dbReference type="PharmGKB" id="PA26158"/>
<dbReference type="VEuPathDB" id="HostDB:ENSG00000138764"/>
<dbReference type="eggNOG" id="KOG0653">
    <property type="taxonomic scope" value="Eukaryota"/>
</dbReference>
<dbReference type="GeneTree" id="ENSGT00940000156423"/>
<dbReference type="HOGENOM" id="CLU_062642_0_1_1"/>
<dbReference type="InParanoid" id="Q16589"/>
<dbReference type="OMA" id="QEWKYQP"/>
<dbReference type="OrthoDB" id="769138at2759"/>
<dbReference type="PAN-GO" id="Q16589">
    <property type="GO annotations" value="6 GO annotations based on evolutionary models"/>
</dbReference>
<dbReference type="PhylomeDB" id="Q16589"/>
<dbReference type="TreeFam" id="TF101007"/>
<dbReference type="PathwayCommons" id="Q16589"/>
<dbReference type="Reactome" id="R-HSA-9617828">
    <property type="pathway name" value="FOXO-mediated transcription of cell cycle genes"/>
</dbReference>
<dbReference type="SignaLink" id="Q16589"/>
<dbReference type="BioGRID-ORCS" id="901">
    <property type="hits" value="12 hits in 1159 CRISPR screens"/>
</dbReference>
<dbReference type="CD-CODE" id="8C2F96ED">
    <property type="entry name" value="Centrosome"/>
</dbReference>
<dbReference type="ChiTaRS" id="CCNG2">
    <property type="organism name" value="human"/>
</dbReference>
<dbReference type="GeneWiki" id="CCNG2"/>
<dbReference type="GenomeRNAi" id="901"/>
<dbReference type="Pharos" id="Q16589">
    <property type="development level" value="Tbio"/>
</dbReference>
<dbReference type="PRO" id="PR:Q16589"/>
<dbReference type="Proteomes" id="UP000005640">
    <property type="component" value="Chromosome 4"/>
</dbReference>
<dbReference type="RNAct" id="Q16589">
    <property type="molecule type" value="protein"/>
</dbReference>
<dbReference type="Bgee" id="ENSG00000138764">
    <property type="expression patterns" value="Expressed in amniotic fluid and 206 other cell types or tissues"/>
</dbReference>
<dbReference type="ExpressionAtlas" id="Q16589">
    <property type="expression patterns" value="baseline and differential"/>
</dbReference>
<dbReference type="GO" id="GO:0000307">
    <property type="term" value="C:cyclin-dependent protein kinase holoenzyme complex"/>
    <property type="evidence" value="ECO:0000318"/>
    <property type="project" value="GO_Central"/>
</dbReference>
<dbReference type="GO" id="GO:0005737">
    <property type="term" value="C:cytoplasm"/>
    <property type="evidence" value="ECO:0000318"/>
    <property type="project" value="GO_Central"/>
</dbReference>
<dbReference type="GO" id="GO:0005634">
    <property type="term" value="C:nucleus"/>
    <property type="evidence" value="ECO:0000318"/>
    <property type="project" value="GO_Central"/>
</dbReference>
<dbReference type="GO" id="GO:0016538">
    <property type="term" value="F:cyclin-dependent protein serine/threonine kinase regulator activity"/>
    <property type="evidence" value="ECO:0000318"/>
    <property type="project" value="GO_Central"/>
</dbReference>
<dbReference type="GO" id="GO:0051301">
    <property type="term" value="P:cell division"/>
    <property type="evidence" value="ECO:0007669"/>
    <property type="project" value="UniProtKB-KW"/>
</dbReference>
<dbReference type="GO" id="GO:0000082">
    <property type="term" value="P:G1/S transition of mitotic cell cycle"/>
    <property type="evidence" value="ECO:0000318"/>
    <property type="project" value="GO_Central"/>
</dbReference>
<dbReference type="GO" id="GO:0051726">
    <property type="term" value="P:regulation of cell cycle"/>
    <property type="evidence" value="ECO:0007669"/>
    <property type="project" value="Ensembl"/>
</dbReference>
<dbReference type="CDD" id="cd20584">
    <property type="entry name" value="CYCLIN_CCNG2"/>
    <property type="match status" value="1"/>
</dbReference>
<dbReference type="FunFam" id="1.10.472.10:FF:000056">
    <property type="entry name" value="Cyclin G2"/>
    <property type="match status" value="1"/>
</dbReference>
<dbReference type="FunFam" id="1.10.472.10:FF:000006">
    <property type="entry name" value="Cyclin I"/>
    <property type="match status" value="1"/>
</dbReference>
<dbReference type="Gene3D" id="1.10.472.10">
    <property type="entry name" value="Cyclin-like"/>
    <property type="match status" value="2"/>
</dbReference>
<dbReference type="InterPro" id="IPR039361">
    <property type="entry name" value="Cyclin"/>
</dbReference>
<dbReference type="InterPro" id="IPR013763">
    <property type="entry name" value="Cyclin-like_dom"/>
</dbReference>
<dbReference type="InterPro" id="IPR036915">
    <property type="entry name" value="Cyclin-like_sf"/>
</dbReference>
<dbReference type="InterPro" id="IPR006671">
    <property type="entry name" value="Cyclin_N"/>
</dbReference>
<dbReference type="PANTHER" id="PTHR10177">
    <property type="entry name" value="CYCLINS"/>
    <property type="match status" value="1"/>
</dbReference>
<dbReference type="Pfam" id="PF00134">
    <property type="entry name" value="Cyclin_N"/>
    <property type="match status" value="1"/>
</dbReference>
<dbReference type="SMART" id="SM00385">
    <property type="entry name" value="CYCLIN"/>
    <property type="match status" value="1"/>
</dbReference>
<dbReference type="SUPFAM" id="SSF47954">
    <property type="entry name" value="Cyclin-like"/>
    <property type="match status" value="1"/>
</dbReference>
<proteinExistence type="evidence at protein level"/>
<gene>
    <name type="primary">CCNG2</name>
</gene>
<keyword id="KW-0025">Alternative splicing</keyword>
<keyword id="KW-0131">Cell cycle</keyword>
<keyword id="KW-0132">Cell division</keyword>
<keyword id="KW-0195">Cyclin</keyword>
<keyword id="KW-0963">Cytoplasm</keyword>
<keyword id="KW-0498">Mitosis</keyword>
<keyword id="KW-1267">Proteomics identification</keyword>
<keyword id="KW-1185">Reference proteome</keyword>
<evidence type="ECO:0000250" key="1"/>
<evidence type="ECO:0000256" key="2">
    <source>
        <dbReference type="SAM" id="MobiDB-lite"/>
    </source>
</evidence>
<evidence type="ECO:0000269" key="3">
    <source ref="3"/>
</evidence>
<evidence type="ECO:0000303" key="4">
    <source>
    </source>
</evidence>
<evidence type="ECO:0000305" key="5"/>
<protein>
    <recommendedName>
        <fullName>Cyclin-G2</fullName>
    </recommendedName>
</protein>
<sequence length="344" mass="38866">MKDLGAEHLAGHEGVQLLGLLNVYLEQEERFQPREKGLSLIEATPENDNTLCPGLRNAKVEDLRSLANFFGSCTETFVLAVNILDRFLALMKVKPKHLSCIGVCSFLLAARIVEEDCNIPSTHDVIRISQCKCTASDIKRMEKIISEKLHYELEATTALNFLHLYHTIILCHTSERKEILSLDKLEAQLKACNCRLIFSKAKPSVLALCLLNLEVETLKSVELLEILLLVKKHSKINDTEFFYWRELVSKCLAEYSSPECCKPDLKKLVWIVSRRTAQNLHNSYYSVPELPTIPEGGCFDESESEDSCEDMSCGEESLSSSPPSDQECTFFFNFKVAQTLCFPS</sequence>
<reference key="1">
    <citation type="journal article" date="1996" name="Oncogene">
        <title>Characterisation of human cyclin G1 and G2: DNA damage inducible genes.</title>
        <authorList>
            <person name="Bates S.A."/>
            <person name="Rowan S."/>
            <person name="Vousden K.H."/>
        </authorList>
    </citation>
    <scope>NUCLEOTIDE SEQUENCE [MRNA] (ISOFORM 1)</scope>
    <source>
        <tissue>Fetal brain</tissue>
        <tissue>Fetal spleen</tissue>
    </source>
</reference>
<reference key="2">
    <citation type="journal article" date="1996" name="J. Biol. Chem.">
        <title>Cyclin G1 and cyclin G2 comprise a new family of cyclins with contrasting tissue-specific and cell cycle-regulated expression.</title>
        <authorList>
            <person name="Horne M.C."/>
            <person name="Goolsby G.L."/>
            <person name="Donaldson K.L."/>
            <person name="Tran D."/>
            <person name="Neubauer M.G."/>
            <person name="Wahl A.F."/>
        </authorList>
    </citation>
    <scope>NUCLEOTIDE SEQUENCE [MRNA] (ISOFORM 1)</scope>
    <source>
        <tissue>T-cell</tissue>
    </source>
</reference>
<reference key="3">
    <citation type="submission" date="2002-10" db="EMBL/GenBank/DDBJ databases">
        <authorList>
            <consortium name="NIEHS SNPs program"/>
        </authorList>
    </citation>
    <scope>NUCLEOTIDE SEQUENCE [GENOMIC DNA]</scope>
    <scope>VARIANTS VAL-4 AND GLY-28</scope>
</reference>
<reference key="4">
    <citation type="journal article" date="2004" name="Nat. Genet.">
        <title>Complete sequencing and characterization of 21,243 full-length human cDNAs.</title>
        <authorList>
            <person name="Ota T."/>
            <person name="Suzuki Y."/>
            <person name="Nishikawa T."/>
            <person name="Otsuki T."/>
            <person name="Sugiyama T."/>
            <person name="Irie R."/>
            <person name="Wakamatsu A."/>
            <person name="Hayashi K."/>
            <person name="Sato H."/>
            <person name="Nagai K."/>
            <person name="Kimura K."/>
            <person name="Makita H."/>
            <person name="Sekine M."/>
            <person name="Obayashi M."/>
            <person name="Nishi T."/>
            <person name="Shibahara T."/>
            <person name="Tanaka T."/>
            <person name="Ishii S."/>
            <person name="Yamamoto J."/>
            <person name="Saito K."/>
            <person name="Kawai Y."/>
            <person name="Isono Y."/>
            <person name="Nakamura Y."/>
            <person name="Nagahari K."/>
            <person name="Murakami K."/>
            <person name="Yasuda T."/>
            <person name="Iwayanagi T."/>
            <person name="Wagatsuma M."/>
            <person name="Shiratori A."/>
            <person name="Sudo H."/>
            <person name="Hosoiri T."/>
            <person name="Kaku Y."/>
            <person name="Kodaira H."/>
            <person name="Kondo H."/>
            <person name="Sugawara M."/>
            <person name="Takahashi M."/>
            <person name="Kanda K."/>
            <person name="Yokoi T."/>
            <person name="Furuya T."/>
            <person name="Kikkawa E."/>
            <person name="Omura Y."/>
            <person name="Abe K."/>
            <person name="Kamihara K."/>
            <person name="Katsuta N."/>
            <person name="Sato K."/>
            <person name="Tanikawa M."/>
            <person name="Yamazaki M."/>
            <person name="Ninomiya K."/>
            <person name="Ishibashi T."/>
            <person name="Yamashita H."/>
            <person name="Murakawa K."/>
            <person name="Fujimori K."/>
            <person name="Tanai H."/>
            <person name="Kimata M."/>
            <person name="Watanabe M."/>
            <person name="Hiraoka S."/>
            <person name="Chiba Y."/>
            <person name="Ishida S."/>
            <person name="Ono Y."/>
            <person name="Takiguchi S."/>
            <person name="Watanabe S."/>
            <person name="Yosida M."/>
            <person name="Hotuta T."/>
            <person name="Kusano J."/>
            <person name="Kanehori K."/>
            <person name="Takahashi-Fujii A."/>
            <person name="Hara H."/>
            <person name="Tanase T.-O."/>
            <person name="Nomura Y."/>
            <person name="Togiya S."/>
            <person name="Komai F."/>
            <person name="Hara R."/>
            <person name="Takeuchi K."/>
            <person name="Arita M."/>
            <person name="Imose N."/>
            <person name="Musashino K."/>
            <person name="Yuuki H."/>
            <person name="Oshima A."/>
            <person name="Sasaki N."/>
            <person name="Aotsuka S."/>
            <person name="Yoshikawa Y."/>
            <person name="Matsunawa H."/>
            <person name="Ichihara T."/>
            <person name="Shiohata N."/>
            <person name="Sano S."/>
            <person name="Moriya S."/>
            <person name="Momiyama H."/>
            <person name="Satoh N."/>
            <person name="Takami S."/>
            <person name="Terashima Y."/>
            <person name="Suzuki O."/>
            <person name="Nakagawa S."/>
            <person name="Senoh A."/>
            <person name="Mizoguchi H."/>
            <person name="Goto Y."/>
            <person name="Shimizu F."/>
            <person name="Wakebe H."/>
            <person name="Hishigaki H."/>
            <person name="Watanabe T."/>
            <person name="Sugiyama A."/>
            <person name="Takemoto M."/>
            <person name="Kawakami B."/>
            <person name="Yamazaki M."/>
            <person name="Watanabe K."/>
            <person name="Kumagai A."/>
            <person name="Itakura S."/>
            <person name="Fukuzumi Y."/>
            <person name="Fujimori Y."/>
            <person name="Komiyama M."/>
            <person name="Tashiro H."/>
            <person name="Tanigami A."/>
            <person name="Fujiwara T."/>
            <person name="Ono T."/>
            <person name="Yamada K."/>
            <person name="Fujii Y."/>
            <person name="Ozaki K."/>
            <person name="Hirao M."/>
            <person name="Ohmori Y."/>
            <person name="Kawabata A."/>
            <person name="Hikiji T."/>
            <person name="Kobatake N."/>
            <person name="Inagaki H."/>
            <person name="Ikema Y."/>
            <person name="Okamoto S."/>
            <person name="Okitani R."/>
            <person name="Kawakami T."/>
            <person name="Noguchi S."/>
            <person name="Itoh T."/>
            <person name="Shigeta K."/>
            <person name="Senba T."/>
            <person name="Matsumura K."/>
            <person name="Nakajima Y."/>
            <person name="Mizuno T."/>
            <person name="Morinaga M."/>
            <person name="Sasaki M."/>
            <person name="Togashi T."/>
            <person name="Oyama M."/>
            <person name="Hata H."/>
            <person name="Watanabe M."/>
            <person name="Komatsu T."/>
            <person name="Mizushima-Sugano J."/>
            <person name="Satoh T."/>
            <person name="Shirai Y."/>
            <person name="Takahashi Y."/>
            <person name="Nakagawa K."/>
            <person name="Okumura K."/>
            <person name="Nagase T."/>
            <person name="Nomura N."/>
            <person name="Kikuchi H."/>
            <person name="Masuho Y."/>
            <person name="Yamashita R."/>
            <person name="Nakai K."/>
            <person name="Yada T."/>
            <person name="Nakamura Y."/>
            <person name="Ohara O."/>
            <person name="Isogai T."/>
            <person name="Sugano S."/>
        </authorList>
    </citation>
    <scope>NUCLEOTIDE SEQUENCE [LARGE SCALE MRNA] (ISOFORMS 1 AND 2)</scope>
    <source>
        <tissue>Cerebellum</tissue>
        <tissue>Spleen</tissue>
    </source>
</reference>
<reference key="5">
    <citation type="submission" date="2004-06" db="EMBL/GenBank/DDBJ databases">
        <title>Cloning of human full open reading frames in Gateway(TM) system entry vector (pDONR201).</title>
        <authorList>
            <person name="Ebert L."/>
            <person name="Schick M."/>
            <person name="Neubert P."/>
            <person name="Schatten R."/>
            <person name="Henze S."/>
            <person name="Korn B."/>
        </authorList>
    </citation>
    <scope>NUCLEOTIDE SEQUENCE [LARGE SCALE MRNA]</scope>
</reference>
<reference key="6">
    <citation type="submission" date="2004-10" db="EMBL/GenBank/DDBJ databases">
        <title>Cloning of human full-length CDSs in BD Creator(TM) system donor vector.</title>
        <authorList>
            <person name="Kalnine N."/>
            <person name="Chen X."/>
            <person name="Rolfs A."/>
            <person name="Halleck A."/>
            <person name="Hines L."/>
            <person name="Eisenstein S."/>
            <person name="Koundinya M."/>
            <person name="Raphael J."/>
            <person name="Moreira D."/>
            <person name="Kelley T."/>
            <person name="LaBaer J."/>
            <person name="Lin Y."/>
            <person name="Phelan M."/>
            <person name="Farmer A."/>
        </authorList>
    </citation>
    <scope>NUCLEOTIDE SEQUENCE [LARGE SCALE MRNA] (ISOFORM 1)</scope>
</reference>
<reference key="7">
    <citation type="journal article" date="2005" name="Nature">
        <title>Generation and annotation of the DNA sequences of human chromosomes 2 and 4.</title>
        <authorList>
            <person name="Hillier L.W."/>
            <person name="Graves T.A."/>
            <person name="Fulton R.S."/>
            <person name="Fulton L.A."/>
            <person name="Pepin K.H."/>
            <person name="Minx P."/>
            <person name="Wagner-McPherson C."/>
            <person name="Layman D."/>
            <person name="Wylie K."/>
            <person name="Sekhon M."/>
            <person name="Becker M.C."/>
            <person name="Fewell G.A."/>
            <person name="Delehaunty K.D."/>
            <person name="Miner T.L."/>
            <person name="Nash W.E."/>
            <person name="Kremitzki C."/>
            <person name="Oddy L."/>
            <person name="Du H."/>
            <person name="Sun H."/>
            <person name="Bradshaw-Cordum H."/>
            <person name="Ali J."/>
            <person name="Carter J."/>
            <person name="Cordes M."/>
            <person name="Harris A."/>
            <person name="Isak A."/>
            <person name="van Brunt A."/>
            <person name="Nguyen C."/>
            <person name="Du F."/>
            <person name="Courtney L."/>
            <person name="Kalicki J."/>
            <person name="Ozersky P."/>
            <person name="Abbott S."/>
            <person name="Armstrong J."/>
            <person name="Belter E.A."/>
            <person name="Caruso L."/>
            <person name="Cedroni M."/>
            <person name="Cotton M."/>
            <person name="Davidson T."/>
            <person name="Desai A."/>
            <person name="Elliott G."/>
            <person name="Erb T."/>
            <person name="Fronick C."/>
            <person name="Gaige T."/>
            <person name="Haakenson W."/>
            <person name="Haglund K."/>
            <person name="Holmes A."/>
            <person name="Harkins R."/>
            <person name="Kim K."/>
            <person name="Kruchowski S.S."/>
            <person name="Strong C.M."/>
            <person name="Grewal N."/>
            <person name="Goyea E."/>
            <person name="Hou S."/>
            <person name="Levy A."/>
            <person name="Martinka S."/>
            <person name="Mead K."/>
            <person name="McLellan M.D."/>
            <person name="Meyer R."/>
            <person name="Randall-Maher J."/>
            <person name="Tomlinson C."/>
            <person name="Dauphin-Kohlberg S."/>
            <person name="Kozlowicz-Reilly A."/>
            <person name="Shah N."/>
            <person name="Swearengen-Shahid S."/>
            <person name="Snider J."/>
            <person name="Strong J.T."/>
            <person name="Thompson J."/>
            <person name="Yoakum M."/>
            <person name="Leonard S."/>
            <person name="Pearman C."/>
            <person name="Trani L."/>
            <person name="Radionenko M."/>
            <person name="Waligorski J.E."/>
            <person name="Wang C."/>
            <person name="Rock S.M."/>
            <person name="Tin-Wollam A.-M."/>
            <person name="Maupin R."/>
            <person name="Latreille P."/>
            <person name="Wendl M.C."/>
            <person name="Yang S.-P."/>
            <person name="Pohl C."/>
            <person name="Wallis J.W."/>
            <person name="Spieth J."/>
            <person name="Bieri T.A."/>
            <person name="Berkowicz N."/>
            <person name="Nelson J.O."/>
            <person name="Osborne J."/>
            <person name="Ding L."/>
            <person name="Meyer R."/>
            <person name="Sabo A."/>
            <person name="Shotland Y."/>
            <person name="Sinha P."/>
            <person name="Wohldmann P.E."/>
            <person name="Cook L.L."/>
            <person name="Hickenbotham M.T."/>
            <person name="Eldred J."/>
            <person name="Williams D."/>
            <person name="Jones T.A."/>
            <person name="She X."/>
            <person name="Ciccarelli F.D."/>
            <person name="Izaurralde E."/>
            <person name="Taylor J."/>
            <person name="Schmutz J."/>
            <person name="Myers R.M."/>
            <person name="Cox D.R."/>
            <person name="Huang X."/>
            <person name="McPherson J.D."/>
            <person name="Mardis E.R."/>
            <person name="Clifton S.W."/>
            <person name="Warren W.C."/>
            <person name="Chinwalla A.T."/>
            <person name="Eddy S.R."/>
            <person name="Marra M.A."/>
            <person name="Ovcharenko I."/>
            <person name="Furey T.S."/>
            <person name="Miller W."/>
            <person name="Eichler E.E."/>
            <person name="Bork P."/>
            <person name="Suyama M."/>
            <person name="Torrents D."/>
            <person name="Waterston R.H."/>
            <person name="Wilson R.K."/>
        </authorList>
    </citation>
    <scope>NUCLEOTIDE SEQUENCE [LARGE SCALE GENOMIC DNA]</scope>
</reference>
<reference key="8">
    <citation type="submission" date="2005-07" db="EMBL/GenBank/DDBJ databases">
        <authorList>
            <person name="Mural R.J."/>
            <person name="Istrail S."/>
            <person name="Sutton G."/>
            <person name="Florea L."/>
            <person name="Halpern A.L."/>
            <person name="Mobarry C.M."/>
            <person name="Lippert R."/>
            <person name="Walenz B."/>
            <person name="Shatkay H."/>
            <person name="Dew I."/>
            <person name="Miller J.R."/>
            <person name="Flanigan M.J."/>
            <person name="Edwards N.J."/>
            <person name="Bolanos R."/>
            <person name="Fasulo D."/>
            <person name="Halldorsson B.V."/>
            <person name="Hannenhalli S."/>
            <person name="Turner R."/>
            <person name="Yooseph S."/>
            <person name="Lu F."/>
            <person name="Nusskern D.R."/>
            <person name="Shue B.C."/>
            <person name="Zheng X.H."/>
            <person name="Zhong F."/>
            <person name="Delcher A.L."/>
            <person name="Huson D.H."/>
            <person name="Kravitz S.A."/>
            <person name="Mouchard L."/>
            <person name="Reinert K."/>
            <person name="Remington K.A."/>
            <person name="Clark A.G."/>
            <person name="Waterman M.S."/>
            <person name="Eichler E.E."/>
            <person name="Adams M.D."/>
            <person name="Hunkapiller M.W."/>
            <person name="Myers E.W."/>
            <person name="Venter J.C."/>
        </authorList>
    </citation>
    <scope>NUCLEOTIDE SEQUENCE [LARGE SCALE GENOMIC DNA]</scope>
</reference>